<accession>P82751</accession>
<reference evidence="3" key="1">
    <citation type="journal article" date="1999" name="Nature">
        <title>Sequence and analysis of chromosome 4 of the plant Arabidopsis thaliana.</title>
        <authorList>
            <person name="Mayer K.F.X."/>
            <person name="Schueller C."/>
            <person name="Wambutt R."/>
            <person name="Murphy G."/>
            <person name="Volckaert G."/>
            <person name="Pohl T."/>
            <person name="Duesterhoeft A."/>
            <person name="Stiekema W."/>
            <person name="Entian K.-D."/>
            <person name="Terryn N."/>
            <person name="Harris B."/>
            <person name="Ansorge W."/>
            <person name="Brandt P."/>
            <person name="Grivell L.A."/>
            <person name="Rieger M."/>
            <person name="Weichselgartner M."/>
            <person name="de Simone V."/>
            <person name="Obermaier B."/>
            <person name="Mache R."/>
            <person name="Mueller M."/>
            <person name="Kreis M."/>
            <person name="Delseny M."/>
            <person name="Puigdomenech P."/>
            <person name="Watson M."/>
            <person name="Schmidtheini T."/>
            <person name="Reichert B."/>
            <person name="Portetelle D."/>
            <person name="Perez-Alonso M."/>
            <person name="Boutry M."/>
            <person name="Bancroft I."/>
            <person name="Vos P."/>
            <person name="Hoheisel J."/>
            <person name="Zimmermann W."/>
            <person name="Wedler H."/>
            <person name="Ridley P."/>
            <person name="Langham S.-A."/>
            <person name="McCullagh B."/>
            <person name="Bilham L."/>
            <person name="Robben J."/>
            <person name="van der Schueren J."/>
            <person name="Grymonprez B."/>
            <person name="Chuang Y.-J."/>
            <person name="Vandenbussche F."/>
            <person name="Braeken M."/>
            <person name="Weltjens I."/>
            <person name="Voet M."/>
            <person name="Bastiaens I."/>
            <person name="Aert R."/>
            <person name="Defoor E."/>
            <person name="Weitzenegger T."/>
            <person name="Bothe G."/>
            <person name="Ramsperger U."/>
            <person name="Hilbert H."/>
            <person name="Braun M."/>
            <person name="Holzer E."/>
            <person name="Brandt A."/>
            <person name="Peters S."/>
            <person name="van Staveren M."/>
            <person name="Dirkse W."/>
            <person name="Mooijman P."/>
            <person name="Klein Lankhorst R."/>
            <person name="Rose M."/>
            <person name="Hauf J."/>
            <person name="Koetter P."/>
            <person name="Berneiser S."/>
            <person name="Hempel S."/>
            <person name="Feldpausch M."/>
            <person name="Lamberth S."/>
            <person name="Van den Daele H."/>
            <person name="De Keyser A."/>
            <person name="Buysshaert C."/>
            <person name="Gielen J."/>
            <person name="Villarroel R."/>
            <person name="De Clercq R."/>
            <person name="van Montagu M."/>
            <person name="Rogers J."/>
            <person name="Cronin A."/>
            <person name="Quail M.A."/>
            <person name="Bray-Allen S."/>
            <person name="Clark L."/>
            <person name="Doggett J."/>
            <person name="Hall S."/>
            <person name="Kay M."/>
            <person name="Lennard N."/>
            <person name="McLay K."/>
            <person name="Mayes R."/>
            <person name="Pettett A."/>
            <person name="Rajandream M.A."/>
            <person name="Lyne M."/>
            <person name="Benes V."/>
            <person name="Rechmann S."/>
            <person name="Borkova D."/>
            <person name="Bloecker H."/>
            <person name="Scharfe M."/>
            <person name="Grimm M."/>
            <person name="Loehnert T.-H."/>
            <person name="Dose S."/>
            <person name="de Haan M."/>
            <person name="Maarse A.C."/>
            <person name="Schaefer M."/>
            <person name="Mueller-Auer S."/>
            <person name="Gabel C."/>
            <person name="Fuchs M."/>
            <person name="Fartmann B."/>
            <person name="Granderath K."/>
            <person name="Dauner D."/>
            <person name="Herzl A."/>
            <person name="Neumann S."/>
            <person name="Argiriou A."/>
            <person name="Vitale D."/>
            <person name="Liguori R."/>
            <person name="Piravandi E."/>
            <person name="Massenet O."/>
            <person name="Quigley F."/>
            <person name="Clabauld G."/>
            <person name="Muendlein A."/>
            <person name="Felber R."/>
            <person name="Schnabl S."/>
            <person name="Hiller R."/>
            <person name="Schmidt W."/>
            <person name="Lecharny A."/>
            <person name="Aubourg S."/>
            <person name="Chefdor F."/>
            <person name="Cooke R."/>
            <person name="Berger C."/>
            <person name="Monfort A."/>
            <person name="Casacuberta E."/>
            <person name="Gibbons T."/>
            <person name="Weber N."/>
            <person name="Vandenbol M."/>
            <person name="Bargues M."/>
            <person name="Terol J."/>
            <person name="Torres A."/>
            <person name="Perez-Perez A."/>
            <person name="Purnelle B."/>
            <person name="Bent E."/>
            <person name="Johnson S."/>
            <person name="Tacon D."/>
            <person name="Jesse T."/>
            <person name="Heijnen L."/>
            <person name="Schwarz S."/>
            <person name="Scholler P."/>
            <person name="Heber S."/>
            <person name="Francs P."/>
            <person name="Bielke C."/>
            <person name="Frishman D."/>
            <person name="Haase D."/>
            <person name="Lemcke K."/>
            <person name="Mewes H.-W."/>
            <person name="Stocker S."/>
            <person name="Zaccaria P."/>
            <person name="Bevan M."/>
            <person name="Wilson R.K."/>
            <person name="de la Bastide M."/>
            <person name="Habermann K."/>
            <person name="Parnell L."/>
            <person name="Dedhia N."/>
            <person name="Gnoj L."/>
            <person name="Schutz K."/>
            <person name="Huang E."/>
            <person name="Spiegel L."/>
            <person name="Sekhon M."/>
            <person name="Murray J."/>
            <person name="Sheet P."/>
            <person name="Cordes M."/>
            <person name="Abu-Threideh J."/>
            <person name="Stoneking T."/>
            <person name="Kalicki J."/>
            <person name="Graves T."/>
            <person name="Harmon G."/>
            <person name="Edwards J."/>
            <person name="Latreille P."/>
            <person name="Courtney L."/>
            <person name="Cloud J."/>
            <person name="Abbott A."/>
            <person name="Scott K."/>
            <person name="Johnson D."/>
            <person name="Minx P."/>
            <person name="Bentley D."/>
            <person name="Fulton B."/>
            <person name="Miller N."/>
            <person name="Greco T."/>
            <person name="Kemp K."/>
            <person name="Kramer J."/>
            <person name="Fulton L."/>
            <person name="Mardis E."/>
            <person name="Dante M."/>
            <person name="Pepin K."/>
            <person name="Hillier L.W."/>
            <person name="Nelson J."/>
            <person name="Spieth J."/>
            <person name="Ryan E."/>
            <person name="Andrews S."/>
            <person name="Geisel C."/>
            <person name="Layman D."/>
            <person name="Du H."/>
            <person name="Ali J."/>
            <person name="Berghoff A."/>
            <person name="Jones K."/>
            <person name="Drone K."/>
            <person name="Cotton M."/>
            <person name="Joshu C."/>
            <person name="Antonoiu B."/>
            <person name="Zidanic M."/>
            <person name="Strong C."/>
            <person name="Sun H."/>
            <person name="Lamar B."/>
            <person name="Yordan C."/>
            <person name="Ma P."/>
            <person name="Zhong J."/>
            <person name="Preston R."/>
            <person name="Vil D."/>
            <person name="Shekher M."/>
            <person name="Matero A."/>
            <person name="Shah R."/>
            <person name="Swaby I.K."/>
            <person name="O'Shaughnessy A."/>
            <person name="Rodriguez M."/>
            <person name="Hoffman J."/>
            <person name="Till S."/>
            <person name="Granat S."/>
            <person name="Shohdy N."/>
            <person name="Hasegawa A."/>
            <person name="Hameed A."/>
            <person name="Lodhi M."/>
            <person name="Johnson A."/>
            <person name="Chen E."/>
            <person name="Marra M.A."/>
            <person name="Martienssen R."/>
            <person name="McCombie W.R."/>
        </authorList>
    </citation>
    <scope>NUCLEOTIDE SEQUENCE [LARGE SCALE GENOMIC DNA]</scope>
    <source>
        <strain>cv. Columbia</strain>
    </source>
</reference>
<reference key="2">
    <citation type="journal article" date="2017" name="Plant J.">
        <title>Araport11: a complete reannotation of the Arabidopsis thaliana reference genome.</title>
        <authorList>
            <person name="Cheng C.Y."/>
            <person name="Krishnakumar V."/>
            <person name="Chan A.P."/>
            <person name="Thibaud-Nissen F."/>
            <person name="Schobel S."/>
            <person name="Town C.D."/>
        </authorList>
    </citation>
    <scope>GENOME REANNOTATION</scope>
    <source>
        <strain>cv. Columbia</strain>
    </source>
</reference>
<reference evidence="3" key="3">
    <citation type="journal article" date="2001" name="Plant Mol. Biol.">
        <title>Two large Arabidopsis thaliana gene families are homologous to the Brassica gene superfamily that encodes pollen coat proteins and the male component of the self-incompatibility response.</title>
        <authorList>
            <person name="Vanoosthuyse V."/>
            <person name="Miege C."/>
            <person name="Dumas C."/>
            <person name="Cock J.M."/>
        </authorList>
    </citation>
    <scope>IDENTIFICATION</scope>
</reference>
<reference key="4">
    <citation type="journal article" date="2005" name="Plant Physiol.">
        <title>Genome organization of more than 300 defensin-like genes in Arabidopsis.</title>
        <authorList>
            <person name="Silverstein K.A.T."/>
            <person name="Graham M.A."/>
            <person name="Paape T.D."/>
            <person name="VandenBosch K.A."/>
        </authorList>
    </citation>
    <scope>GENE FAMILY</scope>
</reference>
<keyword id="KW-0929">Antimicrobial</keyword>
<keyword id="KW-1015">Disulfide bond</keyword>
<keyword id="KW-0295">Fungicide</keyword>
<keyword id="KW-0611">Plant defense</keyword>
<keyword id="KW-1185">Reference proteome</keyword>
<keyword id="KW-0964">Secreted</keyword>
<keyword id="KW-0732">Signal</keyword>
<organism evidence="3">
    <name type="scientific">Arabidopsis thaliana</name>
    <name type="common">Mouse-ear cress</name>
    <dbReference type="NCBI Taxonomy" id="3702"/>
    <lineage>
        <taxon>Eukaryota</taxon>
        <taxon>Viridiplantae</taxon>
        <taxon>Streptophyta</taxon>
        <taxon>Embryophyta</taxon>
        <taxon>Tracheophyta</taxon>
        <taxon>Spermatophyta</taxon>
        <taxon>Magnoliopsida</taxon>
        <taxon>eudicotyledons</taxon>
        <taxon>Gunneridae</taxon>
        <taxon>Pentapetalae</taxon>
        <taxon>rosids</taxon>
        <taxon>malvids</taxon>
        <taxon>Brassicales</taxon>
        <taxon>Brassicaceae</taxon>
        <taxon>Camelineae</taxon>
        <taxon>Arabidopsis</taxon>
    </lineage>
</organism>
<gene>
    <name type="primary">LCR36</name>
    <name type="ordered locus">At4g09153</name>
    <name type="ORF">F23J3</name>
    <name type="ORF">T8A17</name>
</gene>
<protein>
    <recommendedName>
        <fullName>Defensin-like protein 155</fullName>
    </recommendedName>
    <alternativeName>
        <fullName>Low-molecular-weight cysteine-rich protein 36</fullName>
        <shortName>Protein LCR36</shortName>
    </alternativeName>
</protein>
<evidence type="ECO:0000250" key="1"/>
<evidence type="ECO:0000255" key="2"/>
<evidence type="ECO:0000305" key="3"/>
<feature type="signal peptide" evidence="2">
    <location>
        <begin position="1"/>
        <end position="27"/>
    </location>
</feature>
<feature type="chain" id="PRO_0000017275" description="Defensin-like protein 155">
    <location>
        <begin position="28"/>
        <end position="76"/>
    </location>
</feature>
<feature type="disulfide bond" evidence="1">
    <location>
        <begin position="31"/>
        <end position="76"/>
    </location>
</feature>
<feature type="disulfide bond" evidence="1">
    <location>
        <begin position="40"/>
        <end position="59"/>
    </location>
</feature>
<feature type="disulfide bond" evidence="1">
    <location>
        <begin position="45"/>
        <end position="70"/>
    </location>
</feature>
<feature type="disulfide bond" evidence="1">
    <location>
        <begin position="49"/>
        <end position="72"/>
    </location>
</feature>
<dbReference type="EMBL" id="AC005359">
    <property type="status" value="NOT_ANNOTATED_CDS"/>
    <property type="molecule type" value="Genomic_DNA"/>
</dbReference>
<dbReference type="EMBL" id="AF072897">
    <property type="status" value="NOT_ANNOTATED_CDS"/>
    <property type="molecule type" value="Genomic_DNA"/>
</dbReference>
<dbReference type="EMBL" id="AL161514">
    <property type="status" value="NOT_ANNOTATED_CDS"/>
    <property type="molecule type" value="Genomic_DNA"/>
</dbReference>
<dbReference type="EMBL" id="CP002687">
    <property type="protein sequence ID" value="AEE82729.1"/>
    <property type="molecule type" value="Genomic_DNA"/>
</dbReference>
<dbReference type="RefSeq" id="NP_001031604.1">
    <property type="nucleotide sequence ID" value="NM_001036527.2"/>
</dbReference>
<dbReference type="SMR" id="P82751"/>
<dbReference type="PaxDb" id="3702-AT4G09153.1"/>
<dbReference type="ProteomicsDB" id="224014"/>
<dbReference type="EnsemblPlants" id="AT4G09153.1">
    <property type="protein sequence ID" value="AT4G09153.1"/>
    <property type="gene ID" value="AT4G09153"/>
</dbReference>
<dbReference type="GeneID" id="3770109"/>
<dbReference type="Gramene" id="AT4G09153.1">
    <property type="protein sequence ID" value="AT4G09153.1"/>
    <property type="gene ID" value="AT4G09153"/>
</dbReference>
<dbReference type="KEGG" id="ath:AT4G09153"/>
<dbReference type="Araport" id="AT4G09153"/>
<dbReference type="TAIR" id="AT4G09153">
    <property type="gene designation" value="LCR36"/>
</dbReference>
<dbReference type="HOGENOM" id="CLU_182511_1_0_1"/>
<dbReference type="InParanoid" id="P82751"/>
<dbReference type="OMA" id="EQNYCEG"/>
<dbReference type="PhylomeDB" id="P82751"/>
<dbReference type="PRO" id="PR:P82751"/>
<dbReference type="Proteomes" id="UP000006548">
    <property type="component" value="Chromosome 4"/>
</dbReference>
<dbReference type="ExpressionAtlas" id="P82751">
    <property type="expression patterns" value="baseline and differential"/>
</dbReference>
<dbReference type="GO" id="GO:0005576">
    <property type="term" value="C:extracellular region"/>
    <property type="evidence" value="ECO:0007669"/>
    <property type="project" value="UniProtKB-SubCell"/>
</dbReference>
<dbReference type="GO" id="GO:0050832">
    <property type="term" value="P:defense response to fungus"/>
    <property type="evidence" value="ECO:0007669"/>
    <property type="project" value="UniProtKB-KW"/>
</dbReference>
<dbReference type="GO" id="GO:0031640">
    <property type="term" value="P:killing of cells of another organism"/>
    <property type="evidence" value="ECO:0007669"/>
    <property type="project" value="UniProtKB-KW"/>
</dbReference>
<dbReference type="InterPro" id="IPR010851">
    <property type="entry name" value="DEFL"/>
</dbReference>
<dbReference type="PANTHER" id="PTHR33830:SF36">
    <property type="entry name" value="DEFENSIN-LIKE PROTEIN 155-RELATED"/>
    <property type="match status" value="1"/>
</dbReference>
<dbReference type="PANTHER" id="PTHR33830">
    <property type="entry name" value="DEFENSIN-LIKE PROTEIN 184-RELATED"/>
    <property type="match status" value="1"/>
</dbReference>
<dbReference type="Pfam" id="PF07333">
    <property type="entry name" value="SLR1-BP"/>
    <property type="match status" value="1"/>
</dbReference>
<comment type="subcellular location">
    <subcellularLocation>
        <location evidence="1">Secreted</location>
    </subcellularLocation>
</comment>
<comment type="similarity">
    <text evidence="3">Belongs to the DEFL family.</text>
</comment>
<name>DF155_ARATH</name>
<sequence length="76" mass="8272">MAKISCSYLLILMLALSVFSVVEKAKGDKRCSIIIDLSPCYPIECRLSCITERNGDGECVVSKVGSTPNCLCTYDC</sequence>
<proteinExistence type="evidence at transcript level"/>